<proteinExistence type="inferred from homology"/>
<organism>
    <name type="scientific">Haemophilus influenzae (strain ATCC 51907 / DSM 11121 / KW20 / Rd)</name>
    <dbReference type="NCBI Taxonomy" id="71421"/>
    <lineage>
        <taxon>Bacteria</taxon>
        <taxon>Pseudomonadati</taxon>
        <taxon>Pseudomonadota</taxon>
        <taxon>Gammaproteobacteria</taxon>
        <taxon>Pasteurellales</taxon>
        <taxon>Pasteurellaceae</taxon>
        <taxon>Haemophilus</taxon>
    </lineage>
</organism>
<reference key="1">
    <citation type="journal article" date="1995" name="Science">
        <title>Whole-genome random sequencing and assembly of Haemophilus influenzae Rd.</title>
        <authorList>
            <person name="Fleischmann R.D."/>
            <person name="Adams M.D."/>
            <person name="White O."/>
            <person name="Clayton R.A."/>
            <person name="Kirkness E.F."/>
            <person name="Kerlavage A.R."/>
            <person name="Bult C.J."/>
            <person name="Tomb J.-F."/>
            <person name="Dougherty B.A."/>
            <person name="Merrick J.M."/>
            <person name="McKenney K."/>
            <person name="Sutton G.G."/>
            <person name="FitzHugh W."/>
            <person name="Fields C.A."/>
            <person name="Gocayne J.D."/>
            <person name="Scott J.D."/>
            <person name="Shirley R."/>
            <person name="Liu L.-I."/>
            <person name="Glodek A."/>
            <person name="Kelley J.M."/>
            <person name="Weidman J.F."/>
            <person name="Phillips C.A."/>
            <person name="Spriggs T."/>
            <person name="Hedblom E."/>
            <person name="Cotton M.D."/>
            <person name="Utterback T.R."/>
            <person name="Hanna M.C."/>
            <person name="Nguyen D.T."/>
            <person name="Saudek D.M."/>
            <person name="Brandon R.C."/>
            <person name="Fine L.D."/>
            <person name="Fritchman J.L."/>
            <person name="Fuhrmann J.L."/>
            <person name="Geoghagen N.S.M."/>
            <person name="Gnehm C.L."/>
            <person name="McDonald L.A."/>
            <person name="Small K.V."/>
            <person name="Fraser C.M."/>
            <person name="Smith H.O."/>
            <person name="Venter J.C."/>
        </authorList>
    </citation>
    <scope>NUCLEOTIDE SEQUENCE [LARGE SCALE GENOMIC DNA]</scope>
    <source>
        <strain>ATCC 51907 / DSM 11121 / KW20 / Rd</strain>
    </source>
</reference>
<sequence>MNPMLNIAIRAARKAGNVIAKNYERRDAIESTQKGINDYVTNVDKASEAEIIEVIRKSYPDHTIITEETGAIEGKDSDVQWIIDPLDGTRNFMTGLPHFSVSIAVRVKNRTEVGVVYDPIRNELFTAVRGEGAKLNEVRLRVDSKREIQGSILATGFPFKQPKLMPAQFAMMNALIEDAADFRRTGSAALDLCYVASNRIDGYFEMGLKAWDCAAGDLIVREAGGLVCDFDAGNSYLRSGNIIAAPSRVIKEMLNKIRPCLGAEFNH</sequence>
<accession>P44333</accession>
<comment type="function">
    <text evidence="2">Part of the processive rRNA transcription and antitermination complex (rrnTAC). The complex forms an RNA-chaperone ring around the RNA exit tunnel of RNA polymerase (RNAP). It supports rapid transcription and antitermination of rRNA operons, cotranscriptional rRNA folding, and annealing of distal rRNA regions to allow correct ribosome biogenesis. This subunit may play a central role in organizing the structure.</text>
</comment>
<comment type="catalytic activity">
    <reaction evidence="2">
        <text>a myo-inositol phosphate + H2O = myo-inositol + phosphate</text>
        <dbReference type="Rhea" id="RHEA:24056"/>
        <dbReference type="ChEBI" id="CHEBI:15377"/>
        <dbReference type="ChEBI" id="CHEBI:17268"/>
        <dbReference type="ChEBI" id="CHEBI:43474"/>
        <dbReference type="ChEBI" id="CHEBI:84139"/>
        <dbReference type="EC" id="3.1.3.25"/>
    </reaction>
</comment>
<comment type="cofactor">
    <cofactor evidence="2">
        <name>Mg(2+)</name>
        <dbReference type="ChEBI" id="CHEBI:18420"/>
    </cofactor>
</comment>
<comment type="subunit">
    <text evidence="2">Homodimer. The rRNA transcription and antitermination complex (rrnTAC) consists of RNA polymerase (RNAP), NusA, NusB, NusE (rpsJ), NusG, SubB, ribosomal protein S4, DNA and precursor rRNA; S4 is more flexible than other subunits.</text>
</comment>
<comment type="subcellular location">
    <subcellularLocation>
        <location evidence="2">Cytoplasm</location>
    </subcellularLocation>
</comment>
<comment type="similarity">
    <text evidence="3">Belongs to the inositol monophosphatase superfamily.</text>
</comment>
<protein>
    <recommendedName>
        <fullName evidence="2">Nus factor SuhB</fullName>
    </recommendedName>
    <alternativeName>
        <fullName>Inositol-1-monophosphatase</fullName>
        <shortName>I-1-Pase</shortName>
        <shortName>IMPase</shortName>
        <shortName>Inositol-1-phosphatase</shortName>
        <ecNumber evidence="2">3.1.3.25</ecNumber>
    </alternativeName>
</protein>
<evidence type="ECO:0000250" key="1"/>
<evidence type="ECO:0000250" key="2">
    <source>
        <dbReference type="UniProtKB" id="P0ADG4"/>
    </source>
</evidence>
<evidence type="ECO:0000305" key="3"/>
<name>SUHB_HAEIN</name>
<keyword id="KW-0143">Chaperone</keyword>
<keyword id="KW-0963">Cytoplasm</keyword>
<keyword id="KW-0378">Hydrolase</keyword>
<keyword id="KW-0460">Magnesium</keyword>
<keyword id="KW-0479">Metal-binding</keyword>
<keyword id="KW-1185">Reference proteome</keyword>
<keyword id="KW-0690">Ribosome biogenesis</keyword>
<keyword id="KW-0694">RNA-binding</keyword>
<keyword id="KW-0804">Transcription</keyword>
<keyword id="KW-0889">Transcription antitermination</keyword>
<keyword id="KW-0805">Transcription regulation</keyword>
<dbReference type="EC" id="3.1.3.25" evidence="2"/>
<dbReference type="EMBL" id="L42023">
    <property type="protein sequence ID" value="AAC22595.1"/>
    <property type="molecule type" value="Genomic_DNA"/>
</dbReference>
<dbReference type="PIR" id="F64103">
    <property type="entry name" value="F64103"/>
</dbReference>
<dbReference type="RefSeq" id="NP_439097.1">
    <property type="nucleotide sequence ID" value="NC_000907.1"/>
</dbReference>
<dbReference type="SMR" id="P44333"/>
<dbReference type="STRING" id="71421.HI_0937"/>
<dbReference type="EnsemblBacteria" id="AAC22595">
    <property type="protein sequence ID" value="AAC22595"/>
    <property type="gene ID" value="HI_0937"/>
</dbReference>
<dbReference type="KEGG" id="hin:HI_0937"/>
<dbReference type="PATRIC" id="fig|71421.8.peg.978"/>
<dbReference type="eggNOG" id="COG0483">
    <property type="taxonomic scope" value="Bacteria"/>
</dbReference>
<dbReference type="HOGENOM" id="CLU_044118_0_4_6"/>
<dbReference type="OrthoDB" id="9785695at2"/>
<dbReference type="PhylomeDB" id="P44333"/>
<dbReference type="BioCyc" id="HINF71421:G1GJ1-977-MONOMER"/>
<dbReference type="Proteomes" id="UP000000579">
    <property type="component" value="Chromosome"/>
</dbReference>
<dbReference type="GO" id="GO:0005737">
    <property type="term" value="C:cytoplasm"/>
    <property type="evidence" value="ECO:0007669"/>
    <property type="project" value="UniProtKB-SubCell"/>
</dbReference>
<dbReference type="GO" id="GO:0008934">
    <property type="term" value="F:inositol monophosphate 1-phosphatase activity"/>
    <property type="evidence" value="ECO:0000318"/>
    <property type="project" value="GO_Central"/>
</dbReference>
<dbReference type="GO" id="GO:0046872">
    <property type="term" value="F:metal ion binding"/>
    <property type="evidence" value="ECO:0007669"/>
    <property type="project" value="UniProtKB-KW"/>
</dbReference>
<dbReference type="GO" id="GO:0003723">
    <property type="term" value="F:RNA binding"/>
    <property type="evidence" value="ECO:0007669"/>
    <property type="project" value="UniProtKB-KW"/>
</dbReference>
<dbReference type="GO" id="GO:0006020">
    <property type="term" value="P:inositol metabolic process"/>
    <property type="evidence" value="ECO:0000318"/>
    <property type="project" value="GO_Central"/>
</dbReference>
<dbReference type="GO" id="GO:0046854">
    <property type="term" value="P:phosphatidylinositol phosphate biosynthetic process"/>
    <property type="evidence" value="ECO:0007669"/>
    <property type="project" value="InterPro"/>
</dbReference>
<dbReference type="GO" id="GO:0042254">
    <property type="term" value="P:ribosome biogenesis"/>
    <property type="evidence" value="ECO:0007669"/>
    <property type="project" value="UniProtKB-KW"/>
</dbReference>
<dbReference type="GO" id="GO:0007165">
    <property type="term" value="P:signal transduction"/>
    <property type="evidence" value="ECO:0000318"/>
    <property type="project" value="GO_Central"/>
</dbReference>
<dbReference type="GO" id="GO:0031564">
    <property type="term" value="P:transcription antitermination"/>
    <property type="evidence" value="ECO:0007669"/>
    <property type="project" value="UniProtKB-KW"/>
</dbReference>
<dbReference type="CDD" id="cd01639">
    <property type="entry name" value="IMPase"/>
    <property type="match status" value="1"/>
</dbReference>
<dbReference type="FunFam" id="3.30.540.10:FF:000003">
    <property type="entry name" value="Inositol-1-monophosphatase"/>
    <property type="match status" value="1"/>
</dbReference>
<dbReference type="FunFam" id="3.40.190.80:FF:000002">
    <property type="entry name" value="Inositol-1-monophosphatase"/>
    <property type="match status" value="1"/>
</dbReference>
<dbReference type="Gene3D" id="3.40.190.80">
    <property type="match status" value="1"/>
</dbReference>
<dbReference type="Gene3D" id="3.30.540.10">
    <property type="entry name" value="Fructose-1,6-Bisphosphatase, subunit A, domain 1"/>
    <property type="match status" value="1"/>
</dbReference>
<dbReference type="InterPro" id="IPR033942">
    <property type="entry name" value="IMPase"/>
</dbReference>
<dbReference type="InterPro" id="IPR020583">
    <property type="entry name" value="Inositol_monoP_metal-BS"/>
</dbReference>
<dbReference type="InterPro" id="IPR000760">
    <property type="entry name" value="Inositol_monophosphatase-like"/>
</dbReference>
<dbReference type="InterPro" id="IPR020550">
    <property type="entry name" value="Inositol_monophosphatase_CS"/>
</dbReference>
<dbReference type="InterPro" id="IPR022337">
    <property type="entry name" value="Inositol_monophosphatase_SuhB"/>
</dbReference>
<dbReference type="NCBIfam" id="NF008027">
    <property type="entry name" value="PRK10757.1"/>
    <property type="match status" value="1"/>
</dbReference>
<dbReference type="PANTHER" id="PTHR20854">
    <property type="entry name" value="INOSITOL MONOPHOSPHATASE"/>
    <property type="match status" value="1"/>
</dbReference>
<dbReference type="PANTHER" id="PTHR20854:SF4">
    <property type="entry name" value="INOSITOL-1-MONOPHOSPHATASE-RELATED"/>
    <property type="match status" value="1"/>
</dbReference>
<dbReference type="Pfam" id="PF00459">
    <property type="entry name" value="Inositol_P"/>
    <property type="match status" value="1"/>
</dbReference>
<dbReference type="PRINTS" id="PR00377">
    <property type="entry name" value="IMPHPHTASES"/>
</dbReference>
<dbReference type="PRINTS" id="PR01959">
    <property type="entry name" value="SBIMPHPHTASE"/>
</dbReference>
<dbReference type="SUPFAM" id="SSF56655">
    <property type="entry name" value="Carbohydrate phosphatase"/>
    <property type="match status" value="1"/>
</dbReference>
<dbReference type="PROSITE" id="PS00629">
    <property type="entry name" value="IMP_1"/>
    <property type="match status" value="1"/>
</dbReference>
<dbReference type="PROSITE" id="PS00630">
    <property type="entry name" value="IMP_2"/>
    <property type="match status" value="1"/>
</dbReference>
<gene>
    <name type="primary">suhB</name>
    <name type="ordered locus">HI_0937</name>
</gene>
<feature type="chain" id="PRO_0000142562" description="Nus factor SuhB">
    <location>
        <begin position="1"/>
        <end position="267"/>
    </location>
</feature>
<feature type="binding site" evidence="2">
    <location>
        <position position="67"/>
    </location>
    <ligand>
        <name>Mg(2+)</name>
        <dbReference type="ChEBI" id="CHEBI:18420"/>
    </ligand>
</feature>
<feature type="binding site" evidence="1">
    <location>
        <position position="67"/>
    </location>
    <ligand>
        <name>substrate</name>
    </ligand>
</feature>
<feature type="binding site" evidence="2">
    <location>
        <position position="84"/>
    </location>
    <ligand>
        <name>Mg(2+)</name>
        <dbReference type="ChEBI" id="CHEBI:18420"/>
    </ligand>
</feature>
<feature type="binding site" evidence="1">
    <location>
        <begin position="86"/>
        <end position="89"/>
    </location>
    <ligand>
        <name>substrate</name>
    </ligand>
</feature>
<feature type="binding site" evidence="2">
    <location>
        <position position="86"/>
    </location>
    <ligand>
        <name>Mg(2+)</name>
        <dbReference type="ChEBI" id="CHEBI:18420"/>
    </ligand>
</feature>
<feature type="binding site" evidence="1">
    <location>
        <position position="183"/>
    </location>
    <ligand>
        <name>substrate</name>
    </ligand>
</feature>
<feature type="binding site" evidence="1">
    <location>
        <position position="212"/>
    </location>
    <ligand>
        <name>substrate</name>
    </ligand>
</feature>